<feature type="chain" id="PRO_1000143233" description="Small ribosomal subunit protein uS17">
    <location>
        <begin position="1"/>
        <end position="90"/>
    </location>
</feature>
<proteinExistence type="inferred from homology"/>
<protein>
    <recommendedName>
        <fullName evidence="1">Small ribosomal subunit protein uS17</fullName>
    </recommendedName>
    <alternativeName>
        <fullName evidence="2">30S ribosomal protein S17</fullName>
    </alternativeName>
</protein>
<keyword id="KW-1185">Reference proteome</keyword>
<keyword id="KW-0687">Ribonucleoprotein</keyword>
<keyword id="KW-0689">Ribosomal protein</keyword>
<keyword id="KW-0694">RNA-binding</keyword>
<keyword id="KW-0699">rRNA-binding</keyword>
<gene>
    <name evidence="1" type="primary">rpsQ</name>
    <name type="ordered locus">Bmul_0258</name>
    <name type="ordered locus">BMULJ_02996</name>
</gene>
<comment type="function">
    <text evidence="1">One of the primary rRNA binding proteins, it binds specifically to the 5'-end of 16S ribosomal RNA.</text>
</comment>
<comment type="subunit">
    <text evidence="1">Part of the 30S ribosomal subunit.</text>
</comment>
<comment type="similarity">
    <text evidence="1">Belongs to the universal ribosomal protein uS17 family.</text>
</comment>
<accession>A9ADK2</accession>
<dbReference type="EMBL" id="CP000868">
    <property type="protein sequence ID" value="ABX13953.1"/>
    <property type="molecule type" value="Genomic_DNA"/>
</dbReference>
<dbReference type="EMBL" id="AP009385">
    <property type="protein sequence ID" value="BAG44881.1"/>
    <property type="molecule type" value="Genomic_DNA"/>
</dbReference>
<dbReference type="RefSeq" id="WP_006400651.1">
    <property type="nucleotide sequence ID" value="NC_010804.1"/>
</dbReference>
<dbReference type="SMR" id="A9ADK2"/>
<dbReference type="STRING" id="395019.BMULJ_02996"/>
<dbReference type="GeneID" id="89568650"/>
<dbReference type="KEGG" id="bmj:BMULJ_02996"/>
<dbReference type="KEGG" id="bmu:Bmul_0258"/>
<dbReference type="eggNOG" id="COG0186">
    <property type="taxonomic scope" value="Bacteria"/>
</dbReference>
<dbReference type="HOGENOM" id="CLU_073626_1_1_4"/>
<dbReference type="Proteomes" id="UP000008815">
    <property type="component" value="Chromosome 1"/>
</dbReference>
<dbReference type="GO" id="GO:0022627">
    <property type="term" value="C:cytosolic small ribosomal subunit"/>
    <property type="evidence" value="ECO:0007669"/>
    <property type="project" value="TreeGrafter"/>
</dbReference>
<dbReference type="GO" id="GO:0019843">
    <property type="term" value="F:rRNA binding"/>
    <property type="evidence" value="ECO:0007669"/>
    <property type="project" value="UniProtKB-UniRule"/>
</dbReference>
<dbReference type="GO" id="GO:0003735">
    <property type="term" value="F:structural constituent of ribosome"/>
    <property type="evidence" value="ECO:0007669"/>
    <property type="project" value="InterPro"/>
</dbReference>
<dbReference type="GO" id="GO:0006412">
    <property type="term" value="P:translation"/>
    <property type="evidence" value="ECO:0007669"/>
    <property type="project" value="UniProtKB-UniRule"/>
</dbReference>
<dbReference type="CDD" id="cd00364">
    <property type="entry name" value="Ribosomal_uS17"/>
    <property type="match status" value="1"/>
</dbReference>
<dbReference type="Gene3D" id="2.40.50.140">
    <property type="entry name" value="Nucleic acid-binding proteins"/>
    <property type="match status" value="1"/>
</dbReference>
<dbReference type="HAMAP" id="MF_01345_B">
    <property type="entry name" value="Ribosomal_uS17_B"/>
    <property type="match status" value="1"/>
</dbReference>
<dbReference type="InterPro" id="IPR012340">
    <property type="entry name" value="NA-bd_OB-fold"/>
</dbReference>
<dbReference type="InterPro" id="IPR000266">
    <property type="entry name" value="Ribosomal_uS17"/>
</dbReference>
<dbReference type="InterPro" id="IPR019984">
    <property type="entry name" value="Ribosomal_uS17_bact/chlr"/>
</dbReference>
<dbReference type="InterPro" id="IPR019979">
    <property type="entry name" value="Ribosomal_uS17_CS"/>
</dbReference>
<dbReference type="NCBIfam" id="NF004123">
    <property type="entry name" value="PRK05610.1"/>
    <property type="match status" value="1"/>
</dbReference>
<dbReference type="NCBIfam" id="TIGR03635">
    <property type="entry name" value="uS17_bact"/>
    <property type="match status" value="1"/>
</dbReference>
<dbReference type="PANTHER" id="PTHR10744">
    <property type="entry name" value="40S RIBOSOMAL PROTEIN S11 FAMILY MEMBER"/>
    <property type="match status" value="1"/>
</dbReference>
<dbReference type="PANTHER" id="PTHR10744:SF1">
    <property type="entry name" value="SMALL RIBOSOMAL SUBUNIT PROTEIN US17M"/>
    <property type="match status" value="1"/>
</dbReference>
<dbReference type="Pfam" id="PF00366">
    <property type="entry name" value="Ribosomal_S17"/>
    <property type="match status" value="1"/>
</dbReference>
<dbReference type="PRINTS" id="PR00973">
    <property type="entry name" value="RIBOSOMALS17"/>
</dbReference>
<dbReference type="SUPFAM" id="SSF50249">
    <property type="entry name" value="Nucleic acid-binding proteins"/>
    <property type="match status" value="1"/>
</dbReference>
<dbReference type="PROSITE" id="PS00056">
    <property type="entry name" value="RIBOSOMAL_S17"/>
    <property type="match status" value="1"/>
</dbReference>
<name>RS17_BURM1</name>
<evidence type="ECO:0000255" key="1">
    <source>
        <dbReference type="HAMAP-Rule" id="MF_01345"/>
    </source>
</evidence>
<evidence type="ECO:0000305" key="2"/>
<reference key="1">
    <citation type="submission" date="2007-10" db="EMBL/GenBank/DDBJ databases">
        <title>Complete sequence of chromosome 1 of Burkholderia multivorans ATCC 17616.</title>
        <authorList>
            <person name="Copeland A."/>
            <person name="Lucas S."/>
            <person name="Lapidus A."/>
            <person name="Barry K."/>
            <person name="Glavina del Rio T."/>
            <person name="Dalin E."/>
            <person name="Tice H."/>
            <person name="Pitluck S."/>
            <person name="Chain P."/>
            <person name="Malfatti S."/>
            <person name="Shin M."/>
            <person name="Vergez L."/>
            <person name="Schmutz J."/>
            <person name="Larimer F."/>
            <person name="Land M."/>
            <person name="Hauser L."/>
            <person name="Kyrpides N."/>
            <person name="Kim E."/>
            <person name="Tiedje J."/>
            <person name="Richardson P."/>
        </authorList>
    </citation>
    <scope>NUCLEOTIDE SEQUENCE [LARGE SCALE GENOMIC DNA]</scope>
    <source>
        <strain>ATCC 17616 / 249</strain>
    </source>
</reference>
<reference key="2">
    <citation type="submission" date="2007-04" db="EMBL/GenBank/DDBJ databases">
        <title>Complete genome sequence of Burkholderia multivorans ATCC 17616.</title>
        <authorList>
            <person name="Ohtsubo Y."/>
            <person name="Yamashita A."/>
            <person name="Kurokawa K."/>
            <person name="Takami H."/>
            <person name="Yuhara S."/>
            <person name="Nishiyama E."/>
            <person name="Endo R."/>
            <person name="Miyazaki R."/>
            <person name="Ono A."/>
            <person name="Yano K."/>
            <person name="Ito M."/>
            <person name="Sota M."/>
            <person name="Yuji N."/>
            <person name="Hattori M."/>
            <person name="Tsuda M."/>
        </authorList>
    </citation>
    <scope>NUCLEOTIDE SEQUENCE [LARGE SCALE GENOMIC DNA]</scope>
    <source>
        <strain>ATCC 17616 / 249</strain>
    </source>
</reference>
<organism>
    <name type="scientific">Burkholderia multivorans (strain ATCC 17616 / 249)</name>
    <dbReference type="NCBI Taxonomy" id="395019"/>
    <lineage>
        <taxon>Bacteria</taxon>
        <taxon>Pseudomonadati</taxon>
        <taxon>Pseudomonadota</taxon>
        <taxon>Betaproteobacteria</taxon>
        <taxon>Burkholderiales</taxon>
        <taxon>Burkholderiaceae</taxon>
        <taxon>Burkholderia</taxon>
        <taxon>Burkholderia cepacia complex</taxon>
    </lineage>
</organism>
<sequence>MNDSVKTSLKRTLIGRVVSNKMDKTVTVLVEHRVKHPIYGKYVVRSKKYHAHDEANTYNEGDLVEIQETRPVSKTKAWAVARLVEAARVI</sequence>